<comment type="function">
    <text evidence="1 5">Component of the protein complex eIF4F, which is involved in the recognition of the mRNA cap, ATP-dependent unwinding of 5'-terminal secondary structure and recruitment of mRNA to the ribosome (By similarity). Recognizes and binds the 7-methylguanosine-containing mRNA cap during an early step in the initiation of protein synthesis and facilitates ribosome binding by inducing the unwinding of the mRNAs secondary structures (By similarity). Key component of recessive resistance to potyviruses such as peanut stripe virus (PStV) (PubMed:28344571).</text>
</comment>
<comment type="function">
    <text evidence="5">(Microbial infection) Susceptibility host factor required for viral infection by recruiting viral RNAs to the host ribosomal complex via an interaction with viral genome-linked protein (VPg).</text>
</comment>
<comment type="subunit">
    <text evidence="2">EIF4F is a multi-subunit complex, the composition of which varies with external and internal environmental conditions (By similarity). It is composed of at least EIF4A, EIF4E and EIF4G (By similarity). EIF4E is also known to interact with other partners (By similarity). In higher plants two isoforms of EIF4F have been identified, named isoform EIF4F and isoform EIF(iso)4F (By similarity). Isoform EIF4F has subunits p220 and p26, whereas isoform EIF(iso)4F has subunits p82 and p28 (By similarity).</text>
</comment>
<comment type="subunit">
    <text evidence="5">(Microbial infection) Interacts with potyvirus peanut stripe virus (PStV) helper component proteinase (HC-Pro) in the cytoplasm and with PStV viral genome-linked protein (VPg) in the nucleus; these interactions are possible in susceptible hosts but impaired in resistant plants.</text>
</comment>
<comment type="subcellular location">
    <subcellularLocation>
        <location evidence="5">Nucleus</location>
    </subcellularLocation>
    <subcellularLocation>
        <location evidence="5">Cytoplasm</location>
    </subcellularLocation>
</comment>
<comment type="tissue specificity">
    <text evidence="5">Expressed ubiquitously with highest levels in young leaves and roots, and lowest levels in flowers.</text>
</comment>
<comment type="PTM">
    <text evidence="2">According to the redox status, the Cys-129-Cys-167 disulfide bridge may have a role in regulating protein function by affecting its ability to bind capped mRNA.</text>
</comment>
<comment type="disruption phenotype">
    <text evidence="5">(Microbial infection) No significant resistance against peanut stripe virus (PStV) (PubMed:28344571). Plants lacking both eIF4E and eIF(iso)4E exhibit an increased resistance against PStV (PubMed:28344571).</text>
</comment>
<comment type="similarity">
    <text evidence="7">Belongs to the eukaryotic initiation factor 4E family.</text>
</comment>
<comment type="sequence caution" evidence="7">
    <conflict type="erroneous gene model prediction">
        <sequence resource="EMBL-CDS" id="RYQ81915"/>
    </conflict>
</comment>
<keyword id="KW-0963">Cytoplasm</keyword>
<keyword id="KW-1015">Disulfide bond</keyword>
<keyword id="KW-0945">Host-virus interaction</keyword>
<keyword id="KW-0396">Initiation factor</keyword>
<keyword id="KW-0539">Nucleus</keyword>
<keyword id="KW-0611">Plant defense</keyword>
<keyword id="KW-0648">Protein biosynthesis</keyword>
<keyword id="KW-1185">Reference proteome</keyword>
<keyword id="KW-0694">RNA-binding</keyword>
<keyword id="KW-0810">Translation regulation</keyword>
<reference key="1">
    <citation type="submission" date="2012-09" db="EMBL/GenBank/DDBJ databases">
        <title>The function of eIF4E between peanut peanut stripe virus interaction.</title>
        <authorList>
            <person name="Manlin X."/>
        </authorList>
    </citation>
    <scope>NUCLEOTIDE SEQUENCE [MRNA]</scope>
</reference>
<reference key="2">
    <citation type="journal article" date="2019" name="Nat. Genet.">
        <title>The genome of cultivated peanut provides insight into legume karyotypes, polyploid evolution and crop domestication.</title>
        <authorList>
            <person name="Zhuang W."/>
            <person name="Chen H."/>
            <person name="Yang M."/>
            <person name="Wang J."/>
            <person name="Pandey M.K."/>
            <person name="Zhang C."/>
            <person name="Chang W.C."/>
            <person name="Zhang L."/>
            <person name="Zhang X."/>
            <person name="Tang R."/>
            <person name="Garg V."/>
            <person name="Wang X."/>
            <person name="Tang H."/>
            <person name="Chow C.N."/>
            <person name="Wang J."/>
            <person name="Deng Y."/>
            <person name="Wang D."/>
            <person name="Khan A.W."/>
            <person name="Yang Q."/>
            <person name="Cai T."/>
            <person name="Bajaj P."/>
            <person name="Wu K."/>
            <person name="Guo B."/>
            <person name="Zhang X."/>
            <person name="Li J."/>
            <person name="Liang F."/>
            <person name="Hu J."/>
            <person name="Liao B."/>
            <person name="Liu S."/>
            <person name="Chitikineni A."/>
            <person name="Yan H."/>
            <person name="Zheng Y."/>
            <person name="Shan S."/>
            <person name="Liu Q."/>
            <person name="Xie D."/>
            <person name="Wang Z."/>
            <person name="Khan S.A."/>
            <person name="Ali N."/>
            <person name="Zhao C."/>
            <person name="Li X."/>
            <person name="Luo Z."/>
            <person name="Zhang S."/>
            <person name="Zhuang R."/>
            <person name="Peng Z."/>
            <person name="Wang S."/>
            <person name="Mamadou G."/>
            <person name="Zhuang Y."/>
            <person name="Zhao Z."/>
            <person name="Yu W."/>
            <person name="Xiong F."/>
            <person name="Quan W."/>
            <person name="Yuan M."/>
            <person name="Li Y."/>
            <person name="Zou H."/>
            <person name="Xia H."/>
            <person name="Zha L."/>
            <person name="Fan J."/>
            <person name="Yu J."/>
            <person name="Xie W."/>
            <person name="Yuan J."/>
            <person name="Chen K."/>
            <person name="Zhao S."/>
            <person name="Chu W."/>
            <person name="Chen Y."/>
            <person name="Sun P."/>
            <person name="Meng F."/>
            <person name="Zhuo T."/>
            <person name="Zhao Y."/>
            <person name="Li C."/>
            <person name="He G."/>
            <person name="Zhao Y."/>
            <person name="Wang C."/>
            <person name="Kavikishor P.B."/>
            <person name="Pan R.L."/>
            <person name="Paterson A.H."/>
            <person name="Wang X."/>
            <person name="Ming R."/>
            <person name="Varshney R.K."/>
        </authorList>
    </citation>
    <scope>NUCLEOTIDE SEQUENCE [LARGE SCALE GENOMIC DNA]</scope>
    <source>
        <strain>cv. Fuhuasheng</strain>
        <tissue>Leaf</tissue>
    </source>
</reference>
<reference key="3">
    <citation type="journal article" date="2017" name="Front. Microbiol.">
        <title>Translation Initiation Factor eIF4E and eIFiso4E are both required for peanut stripe virus infection in peanut (Arachis hypogaea L.).</title>
        <authorList>
            <person name="Xu M."/>
            <person name="Xie H."/>
            <person name="Wu J."/>
            <person name="Xie L."/>
            <person name="Yang J."/>
            <person name="Chi Y."/>
        </authorList>
    </citation>
    <scope>FUNCTION</scope>
    <scope>FUNCTION (MICROBIAL INFECTION)</scope>
    <scope>DISRUPTION PHENOTYPE (MICROBIAL INFECTION)</scope>
    <scope>INTERACTION WITH POTYVIRUS HC-PRO AND VPG (MICROBIAL INFECTION)</scope>
    <scope>TISSUE SPECIFICITY</scope>
    <scope>SUBCELLULAR LOCATION</scope>
    <source>
        <strain>cv. Huayu 20</strain>
    </source>
</reference>
<name>IF4E1_ARAHY</name>
<accession>K0P2S0</accession>
<accession>A0A444WX02</accession>
<sequence>MVVEDTQKSSITDDQITANPNNENEDLEEGEILDDDDSSATSRPPSSSGALARNPHPLENSWTFWFDNPSAKSKQAAWGSSIRPIYTFATVEEFWSIYNNIHHPSKLAVGADFHCFKHKIEPKWEDPICANGGKWTMTFPRGKSDTSWLYTLLGMIGEQFDHGDEICGAVVNVRNRQEKIALWTKNAANEAAQVSIGKQWKEFLDYNDTIGFIFHEDAKKHDRAAKNKYVI</sequence>
<evidence type="ECO:0000250" key="1">
    <source>
        <dbReference type="UniProtKB" id="A0A075QQ08"/>
    </source>
</evidence>
<evidence type="ECO:0000250" key="2">
    <source>
        <dbReference type="UniProtKB" id="P29557"/>
    </source>
</evidence>
<evidence type="ECO:0000250" key="3">
    <source>
        <dbReference type="UniProtKB" id="Q00LS8"/>
    </source>
</evidence>
<evidence type="ECO:0000256" key="4">
    <source>
        <dbReference type="SAM" id="MobiDB-lite"/>
    </source>
</evidence>
<evidence type="ECO:0000269" key="5">
    <source>
    </source>
</evidence>
<evidence type="ECO:0000303" key="6">
    <source ref="1"/>
</evidence>
<evidence type="ECO:0000305" key="7"/>
<evidence type="ECO:0000312" key="8">
    <source>
        <dbReference type="EMBL" id="RYQ81914.1"/>
    </source>
</evidence>
<protein>
    <recommendedName>
        <fullName evidence="6">Eukaryotic translation initiation factor 4E-1</fullName>
        <shortName evidence="6">PeaeIF4E</shortName>
        <shortName evidence="6">eIF-4E-1</shortName>
    </recommendedName>
    <alternativeName>
        <fullName evidence="7">eIF-4F 25 kDa subunit</fullName>
    </alternativeName>
    <alternativeName>
        <fullName evidence="7">eIF-4F p26 subunit</fullName>
    </alternativeName>
    <alternativeName>
        <fullName evidence="7">mRNA cap-binding protein</fullName>
    </alternativeName>
</protein>
<organism>
    <name type="scientific">Arachis hypogaea</name>
    <name type="common">Peanut</name>
    <dbReference type="NCBI Taxonomy" id="3818"/>
    <lineage>
        <taxon>Eukaryota</taxon>
        <taxon>Viridiplantae</taxon>
        <taxon>Streptophyta</taxon>
        <taxon>Embryophyta</taxon>
        <taxon>Tracheophyta</taxon>
        <taxon>Spermatophyta</taxon>
        <taxon>Magnoliopsida</taxon>
        <taxon>eudicotyledons</taxon>
        <taxon>Gunneridae</taxon>
        <taxon>Pentapetalae</taxon>
        <taxon>rosids</taxon>
        <taxon>fabids</taxon>
        <taxon>Fabales</taxon>
        <taxon>Fabaceae</taxon>
        <taxon>Papilionoideae</taxon>
        <taxon>50 kb inversion clade</taxon>
        <taxon>dalbergioids sensu lato</taxon>
        <taxon>Dalbergieae</taxon>
        <taxon>Pterocarpus clade</taxon>
        <taxon>Arachis</taxon>
    </lineage>
</organism>
<feature type="chain" id="PRO_0000454053" description="Eukaryotic translation initiation factor 4E-1">
    <location>
        <begin position="1"/>
        <end position="231"/>
    </location>
</feature>
<feature type="region of interest" description="Disordered" evidence="4">
    <location>
        <begin position="1"/>
        <end position="55"/>
    </location>
</feature>
<feature type="region of interest" description="EIF4G-binding" evidence="3">
    <location>
        <begin position="56"/>
        <end position="59"/>
    </location>
</feature>
<feature type="region of interest" description="EIF4G-binding" evidence="3">
    <location>
        <begin position="66"/>
        <end position="102"/>
    </location>
</feature>
<feature type="region of interest" description="EIF4G-binding" evidence="3">
    <location>
        <begin position="150"/>
        <end position="159"/>
    </location>
</feature>
<feature type="compositionally biased region" description="Polar residues" evidence="4">
    <location>
        <begin position="8"/>
        <end position="18"/>
    </location>
</feature>
<feature type="compositionally biased region" description="Acidic residues" evidence="4">
    <location>
        <begin position="23"/>
        <end position="38"/>
    </location>
</feature>
<feature type="compositionally biased region" description="Low complexity" evidence="4">
    <location>
        <begin position="39"/>
        <end position="48"/>
    </location>
</feature>
<feature type="binding site" evidence="2">
    <location>
        <begin position="74"/>
        <end position="79"/>
    </location>
    <ligand>
        <name>mRNA</name>
        <dbReference type="ChEBI" id="CHEBI:33699"/>
    </ligand>
    <ligandPart>
        <name>N(7)-methylguanosine 5'-triphosphate group</name>
        <dbReference type="ChEBI" id="CHEBI:74429"/>
        <note>m7GTP residue in mRNA cap</note>
    </ligandPart>
</feature>
<feature type="binding site" evidence="2">
    <location>
        <position position="106"/>
    </location>
    <ligand>
        <name>mRNA</name>
        <dbReference type="ChEBI" id="CHEBI:33699"/>
    </ligand>
    <ligandPart>
        <name>N(7)-methylguanosine 5'-triphosphate group</name>
        <dbReference type="ChEBI" id="CHEBI:74429"/>
        <note>m7GTP residue in mRNA cap</note>
    </ligandPart>
</feature>
<feature type="binding site" evidence="2">
    <location>
        <begin position="124"/>
        <end position="125"/>
    </location>
    <ligand>
        <name>mRNA</name>
        <dbReference type="ChEBI" id="CHEBI:33699"/>
    </ligand>
    <ligandPart>
        <name>N(7)-methylguanosine 5'-triphosphate group</name>
        <dbReference type="ChEBI" id="CHEBI:74429"/>
        <note>m7GTP residue in mRNA cap</note>
    </ligandPart>
</feature>
<feature type="binding site" evidence="2">
    <location>
        <begin position="174"/>
        <end position="179"/>
    </location>
    <ligand>
        <name>mRNA</name>
        <dbReference type="ChEBI" id="CHEBI:33699"/>
    </ligand>
    <ligandPart>
        <name>N(7)-methylguanosine 5'-triphosphate group</name>
        <dbReference type="ChEBI" id="CHEBI:74429"/>
        <note>m7GTP residue in mRNA cap</note>
    </ligandPart>
</feature>
<feature type="binding site" evidence="3">
    <location>
        <begin position="219"/>
        <end position="223"/>
    </location>
    <ligand>
        <name>mRNA</name>
        <dbReference type="ChEBI" id="CHEBI:33699"/>
    </ligand>
    <ligandPart>
        <name>N(7)-methylguanosine 5'-triphosphate group</name>
        <dbReference type="ChEBI" id="CHEBI:74429"/>
        <note>m7GTP residue in mRNA cap</note>
    </ligandPart>
</feature>
<feature type="disulfide bond" evidence="2">
    <location>
        <begin position="129"/>
        <end position="167"/>
    </location>
</feature>
<proteinExistence type="evidence at protein level"/>
<dbReference type="EMBL" id="HE985069">
    <property type="protein sequence ID" value="CCM43797.1"/>
    <property type="molecule type" value="mRNA"/>
</dbReference>
<dbReference type="EMBL" id="SDMP01000020">
    <property type="protein sequence ID" value="RYQ81914.1"/>
    <property type="molecule type" value="Genomic_DNA"/>
</dbReference>
<dbReference type="EMBL" id="SDMP01000020">
    <property type="protein sequence ID" value="RYQ81915.1"/>
    <property type="status" value="ALT_SEQ"/>
    <property type="molecule type" value="Genomic_DNA"/>
</dbReference>
<dbReference type="SMR" id="K0P2S0"/>
<dbReference type="STRING" id="3818.K0P2S0"/>
<dbReference type="EnsemblPlants" id="arahy.Tifrunner.gnm2.ann2.Ah20g024900.1">
    <property type="protein sequence ID" value="arahy.Tifrunner.gnm2.ann2.Ah20g024900.1-CDS"/>
    <property type="gene ID" value="arahy.Tifrunner.gnm2.ann2.Ah20g024900"/>
</dbReference>
<dbReference type="Gramene" id="arahy.Tifrunner.gnm2.ann2.Ah20g024900.1">
    <property type="protein sequence ID" value="arahy.Tifrunner.gnm2.ann2.Ah20g024900.1-CDS"/>
    <property type="gene ID" value="arahy.Tifrunner.gnm2.ann2.Ah20g024900"/>
</dbReference>
<dbReference type="OrthoDB" id="590761at2759"/>
<dbReference type="Proteomes" id="UP000289738">
    <property type="component" value="Chromosome B10"/>
</dbReference>
<dbReference type="GO" id="GO:0005737">
    <property type="term" value="C:cytoplasm"/>
    <property type="evidence" value="ECO:0000314"/>
    <property type="project" value="UniProtKB"/>
</dbReference>
<dbReference type="GO" id="GO:0016281">
    <property type="term" value="C:eukaryotic translation initiation factor 4F complex"/>
    <property type="evidence" value="ECO:0007669"/>
    <property type="project" value="TreeGrafter"/>
</dbReference>
<dbReference type="GO" id="GO:0005634">
    <property type="term" value="C:nucleus"/>
    <property type="evidence" value="ECO:0000314"/>
    <property type="project" value="UniProtKB"/>
</dbReference>
<dbReference type="GO" id="GO:0000340">
    <property type="term" value="F:RNA 7-methylguanosine cap binding"/>
    <property type="evidence" value="ECO:0007669"/>
    <property type="project" value="TreeGrafter"/>
</dbReference>
<dbReference type="GO" id="GO:0003743">
    <property type="term" value="F:translation initiation factor activity"/>
    <property type="evidence" value="ECO:0007669"/>
    <property type="project" value="UniProtKB-KW"/>
</dbReference>
<dbReference type="GO" id="GO:0051607">
    <property type="term" value="P:defense response to virus"/>
    <property type="evidence" value="ECO:0000315"/>
    <property type="project" value="UniProtKB"/>
</dbReference>
<dbReference type="GO" id="GO:0006417">
    <property type="term" value="P:regulation of translation"/>
    <property type="evidence" value="ECO:0007669"/>
    <property type="project" value="UniProtKB-KW"/>
</dbReference>
<dbReference type="FunFam" id="3.30.760.10:FF:000003">
    <property type="entry name" value="Eukaryotic translation initiation factor 4E"/>
    <property type="match status" value="1"/>
</dbReference>
<dbReference type="Gene3D" id="3.30.760.10">
    <property type="entry name" value="RNA Cap, Translation Initiation Factor Eif4e"/>
    <property type="match status" value="1"/>
</dbReference>
<dbReference type="InterPro" id="IPR023398">
    <property type="entry name" value="TIF_eIF4e-like"/>
</dbReference>
<dbReference type="InterPro" id="IPR001040">
    <property type="entry name" value="TIF_eIF_4E"/>
</dbReference>
<dbReference type="InterPro" id="IPR019770">
    <property type="entry name" value="TIF_eIF_4E_CS"/>
</dbReference>
<dbReference type="PANTHER" id="PTHR11960">
    <property type="entry name" value="EUKARYOTIC TRANSLATION INITIATION FACTOR 4E RELATED"/>
    <property type="match status" value="1"/>
</dbReference>
<dbReference type="PANTHER" id="PTHR11960:SF8">
    <property type="entry name" value="EUKARYOTIC TRANSLATION INITIATION FACTOR 4E1-RELATED"/>
    <property type="match status" value="1"/>
</dbReference>
<dbReference type="Pfam" id="PF01652">
    <property type="entry name" value="IF4E"/>
    <property type="match status" value="1"/>
</dbReference>
<dbReference type="SUPFAM" id="SSF55418">
    <property type="entry name" value="eIF4e-like"/>
    <property type="match status" value="1"/>
</dbReference>
<dbReference type="PROSITE" id="PS00813">
    <property type="entry name" value="IF4E"/>
    <property type="match status" value="1"/>
</dbReference>
<gene>
    <name evidence="6" type="primary">eIF4E</name>
    <name evidence="8" type="ordered locus">Ahy_B10g100505</name>
</gene>